<gene>
    <name evidence="1" type="primary">rpoC</name>
    <name type="ordered locus">Z5561</name>
    <name type="ordered locus">ECs4911</name>
</gene>
<name>RPOC_ECO57</name>
<reference key="1">
    <citation type="journal article" date="2001" name="Nature">
        <title>Genome sequence of enterohaemorrhagic Escherichia coli O157:H7.</title>
        <authorList>
            <person name="Perna N.T."/>
            <person name="Plunkett G. III"/>
            <person name="Burland V."/>
            <person name="Mau B."/>
            <person name="Glasner J.D."/>
            <person name="Rose D.J."/>
            <person name="Mayhew G.F."/>
            <person name="Evans P.S."/>
            <person name="Gregor J."/>
            <person name="Kirkpatrick H.A."/>
            <person name="Posfai G."/>
            <person name="Hackett J."/>
            <person name="Klink S."/>
            <person name="Boutin A."/>
            <person name="Shao Y."/>
            <person name="Miller L."/>
            <person name="Grotbeck E.J."/>
            <person name="Davis N.W."/>
            <person name="Lim A."/>
            <person name="Dimalanta E.T."/>
            <person name="Potamousis K."/>
            <person name="Apodaca J."/>
            <person name="Anantharaman T.S."/>
            <person name="Lin J."/>
            <person name="Yen G."/>
            <person name="Schwartz D.C."/>
            <person name="Welch R.A."/>
            <person name="Blattner F.R."/>
        </authorList>
    </citation>
    <scope>NUCLEOTIDE SEQUENCE [LARGE SCALE GENOMIC DNA]</scope>
    <source>
        <strain>O157:H7 / EDL933 / ATCC 700927 / EHEC</strain>
    </source>
</reference>
<reference key="2">
    <citation type="journal article" date="2001" name="DNA Res.">
        <title>Complete genome sequence of enterohemorrhagic Escherichia coli O157:H7 and genomic comparison with a laboratory strain K-12.</title>
        <authorList>
            <person name="Hayashi T."/>
            <person name="Makino K."/>
            <person name="Ohnishi M."/>
            <person name="Kurokawa K."/>
            <person name="Ishii K."/>
            <person name="Yokoyama K."/>
            <person name="Han C.-G."/>
            <person name="Ohtsubo E."/>
            <person name="Nakayama K."/>
            <person name="Murata T."/>
            <person name="Tanaka M."/>
            <person name="Tobe T."/>
            <person name="Iida T."/>
            <person name="Takami H."/>
            <person name="Honda T."/>
            <person name="Sasakawa C."/>
            <person name="Ogasawara N."/>
            <person name="Yasunaga T."/>
            <person name="Kuhara S."/>
            <person name="Shiba T."/>
            <person name="Hattori M."/>
            <person name="Shinagawa H."/>
        </authorList>
    </citation>
    <scope>NUCLEOTIDE SEQUENCE [LARGE SCALE GENOMIC DNA]</scope>
    <source>
        <strain>O157:H7 / Sakai / RIMD 0509952 / EHEC</strain>
    </source>
</reference>
<dbReference type="EC" id="2.7.7.6" evidence="1"/>
<dbReference type="EMBL" id="AE005174">
    <property type="protein sequence ID" value="AAG59184.1"/>
    <property type="molecule type" value="Genomic_DNA"/>
</dbReference>
<dbReference type="EMBL" id="BA000007">
    <property type="protein sequence ID" value="BAB38334.1"/>
    <property type="molecule type" value="Genomic_DNA"/>
</dbReference>
<dbReference type="PIR" id="D86090">
    <property type="entry name" value="D86090"/>
</dbReference>
<dbReference type="PIR" id="G91242">
    <property type="entry name" value="G91242"/>
</dbReference>
<dbReference type="RefSeq" id="NP_312938.1">
    <property type="nucleotide sequence ID" value="NC_002695.1"/>
</dbReference>
<dbReference type="RefSeq" id="WP_000653944.1">
    <property type="nucleotide sequence ID" value="NZ_VOAI01000037.1"/>
</dbReference>
<dbReference type="PDB" id="5TBZ">
    <property type="method" value="X-ray"/>
    <property type="resolution" value="7.00 A"/>
    <property type="chains" value="D/I=1-1407"/>
</dbReference>
<dbReference type="PDBsum" id="5TBZ"/>
<dbReference type="EMDB" id="EMD-11418"/>
<dbReference type="EMDB" id="EMD-11419"/>
<dbReference type="EMDB" id="EMD-11420"/>
<dbReference type="EMDB" id="EMD-11421"/>
<dbReference type="EMDB" id="EMD-11422"/>
<dbReference type="EMDB" id="EMD-11423"/>
<dbReference type="EMDB" id="EMD-11426"/>
<dbReference type="EMDB" id="EMD-12157"/>
<dbReference type="EMDB" id="EMD-13706"/>
<dbReference type="EMDB" id="EMD-13707"/>
<dbReference type="EMDB" id="EMD-13709"/>
<dbReference type="EMDB" id="EMD-13713"/>
<dbReference type="EMDB" id="EMD-13714"/>
<dbReference type="EMDB" id="EMD-13715"/>
<dbReference type="EMDB" id="EMD-13716"/>
<dbReference type="EMDB" id="EMD-13717"/>
<dbReference type="EMDB" id="EMD-13718"/>
<dbReference type="EMDB" id="EMD-13745"/>
<dbReference type="EMDB" id="EMD-13746"/>
<dbReference type="EMDB" id="EMD-15327"/>
<dbReference type="EMDB" id="EMD-15329"/>
<dbReference type="EMDB" id="EMD-15330"/>
<dbReference type="EMDB" id="EMD-15331"/>
<dbReference type="EMDB" id="EMD-15352"/>
<dbReference type="EMDB" id="EMD-15357"/>
<dbReference type="EMDB" id="EMD-17586"/>
<dbReference type="EMDB" id="EMD-20286"/>
<dbReference type="EMDB" id="EMD-20287"/>
<dbReference type="EMDB" id="EMD-20288"/>
<dbReference type="EMDB" id="EMD-20394"/>
<dbReference type="EMDB" id="EMD-20395"/>
<dbReference type="EMDB" id="EMD-22184"/>
<dbReference type="EMDB" id="EMD-22185"/>
<dbReference type="EMDB" id="EMD-22234"/>
<dbReference type="EMDB" id="EMD-22236"/>
<dbReference type="EMDB" id="EMD-22245"/>
<dbReference type="EMDB" id="EMD-22247"/>
<dbReference type="EMDB" id="EMD-22248"/>
<dbReference type="EMDB" id="EMD-22249"/>
<dbReference type="EMDB" id="EMD-51622"/>
<dbReference type="EMDB" id="EMD-51623"/>
<dbReference type="EMDB" id="EMD-7014"/>
<dbReference type="EMDB" id="EMD-7015"/>
<dbReference type="EMDB" id="EMD-7016"/>
<dbReference type="EMDB" id="EMD-7059"/>
<dbReference type="EMDB" id="EMD-8585"/>
<dbReference type="SMR" id="P0A8T8"/>
<dbReference type="STRING" id="155864.Z5561"/>
<dbReference type="GeneID" id="914941"/>
<dbReference type="GeneID" id="93777906"/>
<dbReference type="KEGG" id="ece:Z5561"/>
<dbReference type="KEGG" id="ecs:ECs_4911"/>
<dbReference type="PATRIC" id="fig|386585.9.peg.5135"/>
<dbReference type="eggNOG" id="COG0086">
    <property type="taxonomic scope" value="Bacteria"/>
</dbReference>
<dbReference type="HOGENOM" id="CLU_000524_3_1_6"/>
<dbReference type="OMA" id="QDMIIGL"/>
<dbReference type="Proteomes" id="UP000000558">
    <property type="component" value="Chromosome"/>
</dbReference>
<dbReference type="Proteomes" id="UP000002519">
    <property type="component" value="Chromosome"/>
</dbReference>
<dbReference type="GO" id="GO:0000428">
    <property type="term" value="C:DNA-directed RNA polymerase complex"/>
    <property type="evidence" value="ECO:0007669"/>
    <property type="project" value="UniProtKB-KW"/>
</dbReference>
<dbReference type="GO" id="GO:0003677">
    <property type="term" value="F:DNA binding"/>
    <property type="evidence" value="ECO:0007669"/>
    <property type="project" value="UniProtKB-UniRule"/>
</dbReference>
<dbReference type="GO" id="GO:0003899">
    <property type="term" value="F:DNA-directed RNA polymerase activity"/>
    <property type="evidence" value="ECO:0007669"/>
    <property type="project" value="UniProtKB-UniRule"/>
</dbReference>
<dbReference type="GO" id="GO:0000287">
    <property type="term" value="F:magnesium ion binding"/>
    <property type="evidence" value="ECO:0007669"/>
    <property type="project" value="UniProtKB-UniRule"/>
</dbReference>
<dbReference type="GO" id="GO:0008270">
    <property type="term" value="F:zinc ion binding"/>
    <property type="evidence" value="ECO:0007669"/>
    <property type="project" value="UniProtKB-UniRule"/>
</dbReference>
<dbReference type="GO" id="GO:0006351">
    <property type="term" value="P:DNA-templated transcription"/>
    <property type="evidence" value="ECO:0007669"/>
    <property type="project" value="UniProtKB-UniRule"/>
</dbReference>
<dbReference type="CDD" id="cd02655">
    <property type="entry name" value="RNAP_beta'_C"/>
    <property type="match status" value="1"/>
</dbReference>
<dbReference type="CDD" id="cd01609">
    <property type="entry name" value="RNAP_beta'_N"/>
    <property type="match status" value="1"/>
</dbReference>
<dbReference type="FunFam" id="1.10.132.30:FF:000003">
    <property type="entry name" value="DNA-directed RNA polymerase subunit beta"/>
    <property type="match status" value="1"/>
</dbReference>
<dbReference type="FunFam" id="1.10.150.390:FF:000002">
    <property type="entry name" value="DNA-directed RNA polymerase subunit beta"/>
    <property type="match status" value="1"/>
</dbReference>
<dbReference type="FunFam" id="1.10.274.100:FF:000002">
    <property type="entry name" value="DNA-directed RNA polymerase subunit beta"/>
    <property type="match status" value="1"/>
</dbReference>
<dbReference type="FunFam" id="1.10.40.90:FF:000001">
    <property type="entry name" value="DNA-directed RNA polymerase subunit beta"/>
    <property type="match status" value="1"/>
</dbReference>
<dbReference type="FunFam" id="2.40.50.100:FF:000012">
    <property type="entry name" value="DNA-directed RNA polymerase subunit beta"/>
    <property type="match status" value="1"/>
</dbReference>
<dbReference type="FunFam" id="2.40.50.100:FF:000016">
    <property type="entry name" value="DNA-directed RNA polymerase subunit beta"/>
    <property type="match status" value="1"/>
</dbReference>
<dbReference type="FunFam" id="2.40.50.100:FF:000019">
    <property type="entry name" value="DNA-directed RNA polymerase subunit beta"/>
    <property type="match status" value="1"/>
</dbReference>
<dbReference type="FunFam" id="4.10.860.120:FF:000001">
    <property type="entry name" value="DNA-directed RNA polymerase subunit beta"/>
    <property type="match status" value="1"/>
</dbReference>
<dbReference type="Gene3D" id="1.10.132.30">
    <property type="match status" value="1"/>
</dbReference>
<dbReference type="Gene3D" id="1.10.150.390">
    <property type="match status" value="1"/>
</dbReference>
<dbReference type="Gene3D" id="1.10.1790.20">
    <property type="match status" value="1"/>
</dbReference>
<dbReference type="Gene3D" id="1.10.40.90">
    <property type="match status" value="1"/>
</dbReference>
<dbReference type="Gene3D" id="2.40.40.20">
    <property type="match status" value="1"/>
</dbReference>
<dbReference type="Gene3D" id="2.40.50.100">
    <property type="match status" value="3"/>
</dbReference>
<dbReference type="Gene3D" id="4.10.860.120">
    <property type="entry name" value="RNA polymerase II, clamp domain"/>
    <property type="match status" value="1"/>
</dbReference>
<dbReference type="Gene3D" id="1.10.274.100">
    <property type="entry name" value="RNA polymerase Rpb1, domain 3"/>
    <property type="match status" value="1"/>
</dbReference>
<dbReference type="HAMAP" id="MF_01322">
    <property type="entry name" value="RNApol_bact_RpoC"/>
    <property type="match status" value="1"/>
</dbReference>
<dbReference type="InterPro" id="IPR045867">
    <property type="entry name" value="DNA-dir_RpoC_beta_prime"/>
</dbReference>
<dbReference type="InterPro" id="IPR012754">
    <property type="entry name" value="DNA-dir_RpoC_beta_prime_bact"/>
</dbReference>
<dbReference type="InterPro" id="IPR000722">
    <property type="entry name" value="RNA_pol_asu"/>
</dbReference>
<dbReference type="InterPro" id="IPR006592">
    <property type="entry name" value="RNA_pol_N"/>
</dbReference>
<dbReference type="InterPro" id="IPR007080">
    <property type="entry name" value="RNA_pol_Rpb1_1"/>
</dbReference>
<dbReference type="InterPro" id="IPR007066">
    <property type="entry name" value="RNA_pol_Rpb1_3"/>
</dbReference>
<dbReference type="InterPro" id="IPR042102">
    <property type="entry name" value="RNA_pol_Rpb1_3_sf"/>
</dbReference>
<dbReference type="InterPro" id="IPR007083">
    <property type="entry name" value="RNA_pol_Rpb1_4"/>
</dbReference>
<dbReference type="InterPro" id="IPR007081">
    <property type="entry name" value="RNA_pol_Rpb1_5"/>
</dbReference>
<dbReference type="InterPro" id="IPR044893">
    <property type="entry name" value="RNA_pol_Rpb1_clamp_domain"/>
</dbReference>
<dbReference type="InterPro" id="IPR038120">
    <property type="entry name" value="Rpb1_funnel_sf"/>
</dbReference>
<dbReference type="NCBIfam" id="TIGR02386">
    <property type="entry name" value="rpoC_TIGR"/>
    <property type="match status" value="1"/>
</dbReference>
<dbReference type="PANTHER" id="PTHR19376">
    <property type="entry name" value="DNA-DIRECTED RNA POLYMERASE"/>
    <property type="match status" value="1"/>
</dbReference>
<dbReference type="PANTHER" id="PTHR19376:SF54">
    <property type="entry name" value="DNA-DIRECTED RNA POLYMERASE SUBUNIT BETA"/>
    <property type="match status" value="1"/>
</dbReference>
<dbReference type="Pfam" id="PF04997">
    <property type="entry name" value="RNA_pol_Rpb1_1"/>
    <property type="match status" value="1"/>
</dbReference>
<dbReference type="Pfam" id="PF00623">
    <property type="entry name" value="RNA_pol_Rpb1_2"/>
    <property type="match status" value="2"/>
</dbReference>
<dbReference type="Pfam" id="PF04983">
    <property type="entry name" value="RNA_pol_Rpb1_3"/>
    <property type="match status" value="1"/>
</dbReference>
<dbReference type="Pfam" id="PF05000">
    <property type="entry name" value="RNA_pol_Rpb1_4"/>
    <property type="match status" value="1"/>
</dbReference>
<dbReference type="Pfam" id="PF04998">
    <property type="entry name" value="RNA_pol_Rpb1_5"/>
    <property type="match status" value="1"/>
</dbReference>
<dbReference type="SMART" id="SM00663">
    <property type="entry name" value="RPOLA_N"/>
    <property type="match status" value="1"/>
</dbReference>
<dbReference type="SUPFAM" id="SSF64484">
    <property type="entry name" value="beta and beta-prime subunits of DNA dependent RNA-polymerase"/>
    <property type="match status" value="1"/>
</dbReference>
<sequence length="1407" mass="155160">MKDLLKFLKAQTKTEEFDAIKIALASPDMIRSWSFGEVKKPETINYRTFKPERDGLFCARIFGPVKDYECLCGKYKRLKHRGVICEKCGVEVTQTKVRRERMGHIELASPTAHIWFLKSLPSRIGLLLDMPLRDIERVLYFESYVVIEGGMTNLERQQILTEEQYLDALEEFGDEFDAKMGAEAIQALLKSMDLEQECEQLREELNETNSETKRKKLTKRIKLLEAFVQSGNKPEWMILTVLPVLPPDLRPLVPLDGGRFATSDLNDLYRRVINRNNRLKRLLDLAAPDIIVRNEKRMLQEAVDALLDNGRRGRAITGSNKRPLKSLADMIKGKQGRFRQNLLGKRVDYSGRSVITVGPYLRLHQCGLPKKMALELFKPFIYGKLELRGLATTIKAAKKMVEREEAVVWDILDEVIREHPVLLNRAPTLHRLGIQAFEPVLIEGKAIQLHPLVCAAYNADFDGDQMAVHVPLTLEAQLEARALMMSTNNILSPANGEPIIVPSQDVVLGLYYMTRDCVNAKGEGMVLTGPKEAERLYRSGLASLHARVKVRITEYEKDANGELVAKTSLKDTTVGRAILWMIVPKGLPYSIVNQALGKKAISKMLNTCYRILGLKPTVIFADQIMYTGFAYAARSGASVGIDDMVIPEKKHEIISEAEAEVAEIQEQFQSGLVTAGERYNKVIDIWAAANDRVSKAMMDNLQTETVINRDGQEEKQVSFNSIYMMADSGARGSAAQIRQLAGMRGLMAKPDGSIIETPITANFREGLNVLQYFISTHGARKGLADTALKTANSGYLTRRLVDVAQDLVVTEDDCGTHEGIMMTPVIEGGDVKEPLRDRVLGRVTAEDVLKPGTADILVPRNTLLHEQWCDLLEENSVDAVKVRSVVSCDTDFGVCAHCYGRDLARGHIINKGEAIGVIAAQSIGEPGTQLTMRTFHIGGAASRAAAESSIQVKNKGSIKLSNVKSVVNSSGKLVITSRNTELKLIDEFGRTKESYKVPYGAVLAKGDGEQVAGGETVANWDPHTMPVITEVSGFVRFTDMIDGQTITRQTDELTGLSSLVVLDSAERTAGGKDLRPALKIVDAQGNDVLIPGTDMPAQYFLPGKAIVQLEDGVQISSGDTLARIPQESGGTKDITGGLPRVADLFEARRPKEPAILAEISGIVSFGKETKGKRRLVITPVDGSDPYEEMIPKWRQLNVFEGERVERGDVISDGPEAPHDILRLRGVHAVTRYIVNEVQDVYRLQGVKINDKHIEVIVRQMLRKATIVNAGSSDFLEGEQVEYSRVKIANRELEANGKVGATYSRDLLGITKASLATESFISAASFQETTRVLTEAAVAGKRDELRGLKENVIVGRLIPAGTGYAYHQDRMRRRAAGEAPAAPQVTAEDASASLAELLNAGLGGSDNE</sequence>
<proteinExistence type="evidence at protein level"/>
<protein>
    <recommendedName>
        <fullName evidence="1">DNA-directed RNA polymerase subunit beta'</fullName>
        <shortName evidence="1">RNAP subunit beta'</shortName>
        <ecNumber evidence="1">2.7.7.6</ecNumber>
    </recommendedName>
    <alternativeName>
        <fullName evidence="1">RNA polymerase subunit beta'</fullName>
    </alternativeName>
    <alternativeName>
        <fullName evidence="1">Transcriptase subunit beta'</fullName>
    </alternativeName>
</protein>
<keyword id="KW-0002">3D-structure</keyword>
<keyword id="KW-0007">Acetylation</keyword>
<keyword id="KW-0240">DNA-directed RNA polymerase</keyword>
<keyword id="KW-0460">Magnesium</keyword>
<keyword id="KW-0479">Metal-binding</keyword>
<keyword id="KW-0548">Nucleotidyltransferase</keyword>
<keyword id="KW-1185">Reference proteome</keyword>
<keyword id="KW-0804">Transcription</keyword>
<keyword id="KW-0808">Transferase</keyword>
<keyword id="KW-0862">Zinc</keyword>
<organism>
    <name type="scientific">Escherichia coli O157:H7</name>
    <dbReference type="NCBI Taxonomy" id="83334"/>
    <lineage>
        <taxon>Bacteria</taxon>
        <taxon>Pseudomonadati</taxon>
        <taxon>Pseudomonadota</taxon>
        <taxon>Gammaproteobacteria</taxon>
        <taxon>Enterobacterales</taxon>
        <taxon>Enterobacteriaceae</taxon>
        <taxon>Escherichia</taxon>
    </lineage>
</organism>
<feature type="chain" id="PRO_0000067742" description="DNA-directed RNA polymerase subunit beta'">
    <location>
        <begin position="1"/>
        <end position="1407"/>
    </location>
</feature>
<feature type="binding site" evidence="1">
    <location>
        <position position="70"/>
    </location>
    <ligand>
        <name>Zn(2+)</name>
        <dbReference type="ChEBI" id="CHEBI:29105"/>
        <label>1</label>
    </ligand>
</feature>
<feature type="binding site" evidence="1">
    <location>
        <position position="72"/>
    </location>
    <ligand>
        <name>Zn(2+)</name>
        <dbReference type="ChEBI" id="CHEBI:29105"/>
        <label>1</label>
    </ligand>
</feature>
<feature type="binding site" evidence="1">
    <location>
        <position position="85"/>
    </location>
    <ligand>
        <name>Zn(2+)</name>
        <dbReference type="ChEBI" id="CHEBI:29105"/>
        <label>1</label>
    </ligand>
</feature>
<feature type="binding site" evidence="1">
    <location>
        <position position="88"/>
    </location>
    <ligand>
        <name>Zn(2+)</name>
        <dbReference type="ChEBI" id="CHEBI:29105"/>
        <label>1</label>
    </ligand>
</feature>
<feature type="binding site" evidence="1">
    <location>
        <position position="460"/>
    </location>
    <ligand>
        <name>Mg(2+)</name>
        <dbReference type="ChEBI" id="CHEBI:18420"/>
    </ligand>
</feature>
<feature type="binding site" evidence="1">
    <location>
        <position position="462"/>
    </location>
    <ligand>
        <name>Mg(2+)</name>
        <dbReference type="ChEBI" id="CHEBI:18420"/>
    </ligand>
</feature>
<feature type="binding site" evidence="1">
    <location>
        <position position="464"/>
    </location>
    <ligand>
        <name>Mg(2+)</name>
        <dbReference type="ChEBI" id="CHEBI:18420"/>
    </ligand>
</feature>
<feature type="binding site" evidence="1">
    <location>
        <position position="814"/>
    </location>
    <ligand>
        <name>Zn(2+)</name>
        <dbReference type="ChEBI" id="CHEBI:29105"/>
        <label>2</label>
    </ligand>
</feature>
<feature type="binding site" evidence="1">
    <location>
        <position position="888"/>
    </location>
    <ligand>
        <name>Zn(2+)</name>
        <dbReference type="ChEBI" id="CHEBI:29105"/>
        <label>2</label>
    </ligand>
</feature>
<feature type="binding site" evidence="1">
    <location>
        <position position="895"/>
    </location>
    <ligand>
        <name>Zn(2+)</name>
        <dbReference type="ChEBI" id="CHEBI:29105"/>
        <label>2</label>
    </ligand>
</feature>
<feature type="binding site" evidence="1">
    <location>
        <position position="898"/>
    </location>
    <ligand>
        <name>Zn(2+)</name>
        <dbReference type="ChEBI" id="CHEBI:29105"/>
        <label>2</label>
    </ligand>
</feature>
<feature type="modified residue" description="N6-acetyllysine" evidence="1">
    <location>
        <position position="972"/>
    </location>
</feature>
<accession>P0A8T8</accession>
<accession>P00577</accession>
<accession>P00578</accession>
<accession>P78134</accession>
<evidence type="ECO:0000255" key="1">
    <source>
        <dbReference type="HAMAP-Rule" id="MF_01322"/>
    </source>
</evidence>
<comment type="function">
    <text evidence="1">DNA-dependent RNA polymerase catalyzes the transcription of DNA into RNA using the four ribonucleoside triphosphates as substrates.</text>
</comment>
<comment type="catalytic activity">
    <reaction evidence="1">
        <text>RNA(n) + a ribonucleoside 5'-triphosphate = RNA(n+1) + diphosphate</text>
        <dbReference type="Rhea" id="RHEA:21248"/>
        <dbReference type="Rhea" id="RHEA-COMP:14527"/>
        <dbReference type="Rhea" id="RHEA-COMP:17342"/>
        <dbReference type="ChEBI" id="CHEBI:33019"/>
        <dbReference type="ChEBI" id="CHEBI:61557"/>
        <dbReference type="ChEBI" id="CHEBI:140395"/>
        <dbReference type="EC" id="2.7.7.6"/>
    </reaction>
</comment>
<comment type="cofactor">
    <cofactor evidence="1">
        <name>Mg(2+)</name>
        <dbReference type="ChEBI" id="CHEBI:18420"/>
    </cofactor>
    <text evidence="1">Binds 1 Mg(2+) ion per subunit.</text>
</comment>
<comment type="cofactor">
    <cofactor evidence="1">
        <name>Zn(2+)</name>
        <dbReference type="ChEBI" id="CHEBI:29105"/>
    </cofactor>
    <text evidence="1">Binds 2 Zn(2+) ions per subunit.</text>
</comment>
<comment type="subunit">
    <text evidence="1">The RNAP catalytic core consists of 2 alpha, 1 beta, 1 beta' and 1 omega subunit. When a sigma factor is associated with the core the holoenzyme is formed, which can initiate transcription.</text>
</comment>
<comment type="similarity">
    <text evidence="1">Belongs to the RNA polymerase beta' chain family.</text>
</comment>